<evidence type="ECO:0000250" key="1"/>
<evidence type="ECO:0000255" key="2">
    <source>
        <dbReference type="HAMAP-Rule" id="MF_00118"/>
    </source>
</evidence>
<gene>
    <name evidence="2" type="primary">tuf</name>
    <name type="ordered locus">MM_2264</name>
</gene>
<keyword id="KW-0963">Cytoplasm</keyword>
<keyword id="KW-0251">Elongation factor</keyword>
<keyword id="KW-0342">GTP-binding</keyword>
<keyword id="KW-0378">Hydrolase</keyword>
<keyword id="KW-0460">Magnesium</keyword>
<keyword id="KW-0479">Metal-binding</keyword>
<keyword id="KW-0547">Nucleotide-binding</keyword>
<keyword id="KW-0648">Protein biosynthesis</keyword>
<proteinExistence type="inferred from homology"/>
<protein>
    <recommendedName>
        <fullName evidence="2">Elongation factor 1-alpha</fullName>
        <shortName evidence="2">EF-1-alpha</shortName>
        <ecNumber evidence="2">3.6.5.3</ecNumber>
    </recommendedName>
    <alternativeName>
        <fullName evidence="2">Elongation factor Tu</fullName>
        <shortName evidence="2">EF-Tu</shortName>
    </alternativeName>
</protein>
<organism>
    <name type="scientific">Methanosarcina mazei (strain ATCC BAA-159 / DSM 3647 / Goe1 / Go1 / JCM 11833 / OCM 88)</name>
    <name type="common">Methanosarcina frisia</name>
    <dbReference type="NCBI Taxonomy" id="192952"/>
    <lineage>
        <taxon>Archaea</taxon>
        <taxon>Methanobacteriati</taxon>
        <taxon>Methanobacteriota</taxon>
        <taxon>Stenosarchaea group</taxon>
        <taxon>Methanomicrobia</taxon>
        <taxon>Methanosarcinales</taxon>
        <taxon>Methanosarcinaceae</taxon>
        <taxon>Methanosarcina</taxon>
    </lineage>
</organism>
<sequence>MAADKPHMNLAVIGHIDHGKSTFVGRLMYDAGAVPAHIIEKYKEEAKQKGKESFAFAWVMDSLKEERERGITIDIAHKRFDTDKFYFTVVDCPGHRDFVKNMITGASQADAAVLVVAAPDGVMAQTKEHIFLSRTLGINQLIVAINKMDAVDYSEARYKEVVEQVSGILKMIGFKPSEIPFIPTSAFHGDNIMKLSDKTPWYKGPAIMEALNSLKEPEKPSTLPLRIPVEDAYTISGIGTVPVGRVETGVMKKGDKVVFMPGGAGGEVKSIEMHHEEIPQATPGDNIGWNVRGIGKNDVRRGDVCGHADNPPKVADEFVGQIVVLQHPSAITAGYTPVFHAHTSQIACQLIALNKKLDPKTGQVKEENPTFLKAGDAAIVTIKPTKPMVIEPVKEIPQLGRFAIRDMGMTIAAGMCMSVKQK</sequence>
<dbReference type="EC" id="3.6.5.3" evidence="2"/>
<dbReference type="EMBL" id="AE008384">
    <property type="protein sequence ID" value="AAM31960.1"/>
    <property type="molecule type" value="Genomic_DNA"/>
</dbReference>
<dbReference type="RefSeq" id="WP_011034191.1">
    <property type="nucleotide sequence ID" value="NC_003901.1"/>
</dbReference>
<dbReference type="SMR" id="Q8PUR8"/>
<dbReference type="GeneID" id="1480606"/>
<dbReference type="GeneID" id="82161330"/>
<dbReference type="KEGG" id="mma:MM_2264"/>
<dbReference type="PATRIC" id="fig|192952.21.peg.2594"/>
<dbReference type="eggNOG" id="arCOG01561">
    <property type="taxonomic scope" value="Archaea"/>
</dbReference>
<dbReference type="HOGENOM" id="CLU_007265_3_5_2"/>
<dbReference type="Proteomes" id="UP000000595">
    <property type="component" value="Chromosome"/>
</dbReference>
<dbReference type="GO" id="GO:0005737">
    <property type="term" value="C:cytoplasm"/>
    <property type="evidence" value="ECO:0007669"/>
    <property type="project" value="UniProtKB-SubCell"/>
</dbReference>
<dbReference type="GO" id="GO:0005525">
    <property type="term" value="F:GTP binding"/>
    <property type="evidence" value="ECO:0007669"/>
    <property type="project" value="UniProtKB-UniRule"/>
</dbReference>
<dbReference type="GO" id="GO:0003924">
    <property type="term" value="F:GTPase activity"/>
    <property type="evidence" value="ECO:0007669"/>
    <property type="project" value="InterPro"/>
</dbReference>
<dbReference type="GO" id="GO:0003746">
    <property type="term" value="F:translation elongation factor activity"/>
    <property type="evidence" value="ECO:0007669"/>
    <property type="project" value="UniProtKB-UniRule"/>
</dbReference>
<dbReference type="CDD" id="cd01883">
    <property type="entry name" value="EF1_alpha"/>
    <property type="match status" value="1"/>
</dbReference>
<dbReference type="CDD" id="cd03693">
    <property type="entry name" value="EF1_alpha_II"/>
    <property type="match status" value="1"/>
</dbReference>
<dbReference type="CDD" id="cd03705">
    <property type="entry name" value="EF1_alpha_III"/>
    <property type="match status" value="1"/>
</dbReference>
<dbReference type="FunFam" id="2.40.30.10:FF:000003">
    <property type="entry name" value="Elongation factor 1-alpha"/>
    <property type="match status" value="1"/>
</dbReference>
<dbReference type="FunFam" id="2.40.30.10:FF:000005">
    <property type="entry name" value="Elongation factor 1-alpha"/>
    <property type="match status" value="1"/>
</dbReference>
<dbReference type="FunFam" id="3.40.50.300:FF:000204">
    <property type="entry name" value="Translation elongation factor Tu"/>
    <property type="match status" value="1"/>
</dbReference>
<dbReference type="Gene3D" id="3.40.50.300">
    <property type="entry name" value="P-loop containing nucleotide triphosphate hydrolases"/>
    <property type="match status" value="1"/>
</dbReference>
<dbReference type="Gene3D" id="2.40.30.10">
    <property type="entry name" value="Translation factors"/>
    <property type="match status" value="2"/>
</dbReference>
<dbReference type="HAMAP" id="MF_00118_A">
    <property type="entry name" value="EF_Tu_A"/>
    <property type="match status" value="1"/>
</dbReference>
<dbReference type="InterPro" id="IPR004161">
    <property type="entry name" value="EFTu-like_2"/>
</dbReference>
<dbReference type="InterPro" id="IPR031157">
    <property type="entry name" value="G_TR_CS"/>
</dbReference>
<dbReference type="InterPro" id="IPR054696">
    <property type="entry name" value="GTP-eEF1A_C"/>
</dbReference>
<dbReference type="InterPro" id="IPR027417">
    <property type="entry name" value="P-loop_NTPase"/>
</dbReference>
<dbReference type="InterPro" id="IPR005225">
    <property type="entry name" value="Small_GTP-bd"/>
</dbReference>
<dbReference type="InterPro" id="IPR000795">
    <property type="entry name" value="T_Tr_GTP-bd_dom"/>
</dbReference>
<dbReference type="InterPro" id="IPR050100">
    <property type="entry name" value="TRAFAC_GTPase_members"/>
</dbReference>
<dbReference type="InterPro" id="IPR009000">
    <property type="entry name" value="Transl_B-barrel_sf"/>
</dbReference>
<dbReference type="InterPro" id="IPR009001">
    <property type="entry name" value="Transl_elong_EF1A/Init_IF2_C"/>
</dbReference>
<dbReference type="InterPro" id="IPR004539">
    <property type="entry name" value="Transl_elong_EF1A_euk/arc"/>
</dbReference>
<dbReference type="NCBIfam" id="TIGR00483">
    <property type="entry name" value="EF-1_alpha"/>
    <property type="match status" value="1"/>
</dbReference>
<dbReference type="NCBIfam" id="NF008969">
    <property type="entry name" value="PRK12317.1"/>
    <property type="match status" value="1"/>
</dbReference>
<dbReference type="NCBIfam" id="TIGR00231">
    <property type="entry name" value="small_GTP"/>
    <property type="match status" value="1"/>
</dbReference>
<dbReference type="PANTHER" id="PTHR23115">
    <property type="entry name" value="TRANSLATION FACTOR"/>
    <property type="match status" value="1"/>
</dbReference>
<dbReference type="Pfam" id="PF22594">
    <property type="entry name" value="GTP-eEF1A_C"/>
    <property type="match status" value="1"/>
</dbReference>
<dbReference type="Pfam" id="PF00009">
    <property type="entry name" value="GTP_EFTU"/>
    <property type="match status" value="1"/>
</dbReference>
<dbReference type="Pfam" id="PF03144">
    <property type="entry name" value="GTP_EFTU_D2"/>
    <property type="match status" value="1"/>
</dbReference>
<dbReference type="PRINTS" id="PR00315">
    <property type="entry name" value="ELONGATNFCT"/>
</dbReference>
<dbReference type="SUPFAM" id="SSF50465">
    <property type="entry name" value="EF-Tu/eEF-1alpha/eIF2-gamma C-terminal domain"/>
    <property type="match status" value="1"/>
</dbReference>
<dbReference type="SUPFAM" id="SSF52540">
    <property type="entry name" value="P-loop containing nucleoside triphosphate hydrolases"/>
    <property type="match status" value="1"/>
</dbReference>
<dbReference type="SUPFAM" id="SSF50447">
    <property type="entry name" value="Translation proteins"/>
    <property type="match status" value="1"/>
</dbReference>
<dbReference type="PROSITE" id="PS00301">
    <property type="entry name" value="G_TR_1"/>
    <property type="match status" value="1"/>
</dbReference>
<dbReference type="PROSITE" id="PS51722">
    <property type="entry name" value="G_TR_2"/>
    <property type="match status" value="1"/>
</dbReference>
<accession>Q8PUR8</accession>
<name>EF1A_METMA</name>
<feature type="chain" id="PRO_0000090982" description="Elongation factor 1-alpha">
    <location>
        <begin position="1"/>
        <end position="422"/>
    </location>
</feature>
<feature type="domain" description="tr-type G">
    <location>
        <begin position="5"/>
        <end position="221"/>
    </location>
</feature>
<feature type="region of interest" description="G1" evidence="1">
    <location>
        <begin position="14"/>
        <end position="21"/>
    </location>
</feature>
<feature type="region of interest" description="G2" evidence="1">
    <location>
        <begin position="70"/>
        <end position="74"/>
    </location>
</feature>
<feature type="region of interest" description="G3" evidence="1">
    <location>
        <begin position="91"/>
        <end position="94"/>
    </location>
</feature>
<feature type="region of interest" description="G4" evidence="1">
    <location>
        <begin position="146"/>
        <end position="149"/>
    </location>
</feature>
<feature type="region of interest" description="G5" evidence="1">
    <location>
        <begin position="185"/>
        <end position="187"/>
    </location>
</feature>
<feature type="binding site" evidence="2">
    <location>
        <begin position="14"/>
        <end position="21"/>
    </location>
    <ligand>
        <name>GTP</name>
        <dbReference type="ChEBI" id="CHEBI:37565"/>
    </ligand>
</feature>
<feature type="binding site" evidence="2">
    <location>
        <position position="21"/>
    </location>
    <ligand>
        <name>Mg(2+)</name>
        <dbReference type="ChEBI" id="CHEBI:18420"/>
    </ligand>
</feature>
<feature type="binding site" evidence="2">
    <location>
        <begin position="91"/>
        <end position="95"/>
    </location>
    <ligand>
        <name>GTP</name>
        <dbReference type="ChEBI" id="CHEBI:37565"/>
    </ligand>
</feature>
<feature type="binding site" evidence="2">
    <location>
        <begin position="146"/>
        <end position="149"/>
    </location>
    <ligand>
        <name>GTP</name>
        <dbReference type="ChEBI" id="CHEBI:37565"/>
    </ligand>
</feature>
<reference key="1">
    <citation type="journal article" date="2002" name="J. Mol. Microbiol. Biotechnol.">
        <title>The genome of Methanosarcina mazei: evidence for lateral gene transfer between Bacteria and Archaea.</title>
        <authorList>
            <person name="Deppenmeier U."/>
            <person name="Johann A."/>
            <person name="Hartsch T."/>
            <person name="Merkl R."/>
            <person name="Schmitz R.A."/>
            <person name="Martinez-Arias R."/>
            <person name="Henne A."/>
            <person name="Wiezer A."/>
            <person name="Baeumer S."/>
            <person name="Jacobi C."/>
            <person name="Brueggemann H."/>
            <person name="Lienard T."/>
            <person name="Christmann A."/>
            <person name="Boemecke M."/>
            <person name="Steckel S."/>
            <person name="Bhattacharyya A."/>
            <person name="Lykidis A."/>
            <person name="Overbeek R."/>
            <person name="Klenk H.-P."/>
            <person name="Gunsalus R.P."/>
            <person name="Fritz H.-J."/>
            <person name="Gottschalk G."/>
        </authorList>
    </citation>
    <scope>NUCLEOTIDE SEQUENCE [LARGE SCALE GENOMIC DNA]</scope>
    <source>
        <strain>ATCC BAA-159 / DSM 3647 / Goe1 / Go1 / JCM 11833 / OCM 88</strain>
    </source>
</reference>
<comment type="function">
    <text evidence="2">GTP hydrolase that promotes the GTP-dependent binding of aminoacyl-tRNA to the A-site of ribosomes during protein biosynthesis.</text>
</comment>
<comment type="catalytic activity">
    <reaction evidence="2">
        <text>GTP + H2O = GDP + phosphate + H(+)</text>
        <dbReference type="Rhea" id="RHEA:19669"/>
        <dbReference type="ChEBI" id="CHEBI:15377"/>
        <dbReference type="ChEBI" id="CHEBI:15378"/>
        <dbReference type="ChEBI" id="CHEBI:37565"/>
        <dbReference type="ChEBI" id="CHEBI:43474"/>
        <dbReference type="ChEBI" id="CHEBI:58189"/>
        <dbReference type="EC" id="3.6.5.3"/>
    </reaction>
    <physiologicalReaction direction="left-to-right" evidence="2">
        <dbReference type="Rhea" id="RHEA:19670"/>
    </physiologicalReaction>
</comment>
<comment type="subcellular location">
    <subcellularLocation>
        <location evidence="2">Cytoplasm</location>
    </subcellularLocation>
</comment>
<comment type="similarity">
    <text evidence="2">Belongs to the TRAFAC class translation factor GTPase superfamily. Classic translation factor GTPase family. EF-Tu/EF-1A subfamily.</text>
</comment>